<evidence type="ECO:0000250" key="1"/>
<evidence type="ECO:0000256" key="2">
    <source>
        <dbReference type="SAM" id="MobiDB-lite"/>
    </source>
</evidence>
<evidence type="ECO:0000305" key="3"/>
<evidence type="ECO:0000312" key="4">
    <source>
        <dbReference type="MGI" id="MGI:1914282"/>
    </source>
</evidence>
<protein>
    <recommendedName>
        <fullName>snRNA-activating protein complex subunit 5</fullName>
        <shortName evidence="3">SNAPc subunit 5</shortName>
    </recommendedName>
    <alternativeName>
        <fullName>Small nuclear RNA-activating complex polypeptide 5</fullName>
    </alternativeName>
    <alternativeName>
        <fullName>snRNA-activating protein complex 19 kDa subunit</fullName>
        <shortName>SNAPc 19 kDa subunit</shortName>
    </alternativeName>
</protein>
<accession>Q8R2K7</accession>
<accession>E9QPK5</accession>
<proteinExistence type="inferred from homology"/>
<comment type="function">
    <text evidence="1">Part of the SNAPc complex required for the transcription of both RNA polymerase II and III small-nuclear RNA genes. Binds to the proximal sequence element (PSE), a non-TATA-box basal promoter element common to these 2 types of genes. Recruits TBP and BRF2 to the U6 snRNA TATA box (By similarity).</text>
</comment>
<comment type="subunit">
    <text evidence="1">Part of the SNAPc complex composed of 5 subunits: SNAPC1, SNAPC2, SNAPC3, SNAPC4 and SNAPC5. SNAPC5 interacts with SNAPC4 (By similarity).</text>
</comment>
<comment type="subcellular location">
    <subcellularLocation>
        <location evidence="1">Nucleus</location>
    </subcellularLocation>
</comment>
<keyword id="KW-0539">Nucleus</keyword>
<keyword id="KW-1185">Reference proteome</keyword>
<keyword id="KW-0804">Transcription</keyword>
<keyword id="KW-0805">Transcription regulation</keyword>
<sequence>MLSRLQELRKEEETLLRLKAALHDQLNRLKVEELALQSMINSRGRTETLSSQPAPEQLCDMSLHVDNEVTINQTTLKLSTRSPMEEEEEEEEEEEEEEESDS</sequence>
<dbReference type="EMBL" id="AC160118">
    <property type="status" value="NOT_ANNOTATED_CDS"/>
    <property type="molecule type" value="Genomic_DNA"/>
</dbReference>
<dbReference type="EMBL" id="BC028529">
    <property type="protein sequence ID" value="AAH28529.1"/>
    <property type="molecule type" value="mRNA"/>
</dbReference>
<dbReference type="CCDS" id="CCDS23276.1"/>
<dbReference type="RefSeq" id="NP_899139.2">
    <property type="nucleotide sequence ID" value="NM_183316.3"/>
</dbReference>
<dbReference type="RefSeq" id="XP_036010978.1">
    <property type="nucleotide sequence ID" value="XM_036155085.1"/>
</dbReference>
<dbReference type="SMR" id="Q8R2K7"/>
<dbReference type="BioGRID" id="237056">
    <property type="interactions" value="2"/>
</dbReference>
<dbReference type="FunCoup" id="Q8R2K7">
    <property type="interactions" value="939"/>
</dbReference>
<dbReference type="STRING" id="10090.ENSMUSP00000034965"/>
<dbReference type="PhosphoSitePlus" id="Q8R2K7"/>
<dbReference type="jPOST" id="Q8R2K7"/>
<dbReference type="PaxDb" id="10090-ENSMUSP00000034965"/>
<dbReference type="ProteomicsDB" id="261534"/>
<dbReference type="ProteomicsDB" id="357012"/>
<dbReference type="Pumba" id="Q8R2K7"/>
<dbReference type="Antibodypedia" id="26135">
    <property type="antibodies" value="132 antibodies from 25 providers"/>
</dbReference>
<dbReference type="DNASU" id="330959"/>
<dbReference type="Ensembl" id="ENSMUST00000034965.8">
    <property type="protein sequence ID" value="ENSMUSP00000034965.7"/>
    <property type="gene ID" value="ENSMUSG00000032398.8"/>
</dbReference>
<dbReference type="GeneID" id="330959"/>
<dbReference type="KEGG" id="mmu:330959"/>
<dbReference type="AGR" id="MGI:1914282"/>
<dbReference type="CTD" id="10302"/>
<dbReference type="MGI" id="MGI:1914282">
    <property type="gene designation" value="Snapc5"/>
</dbReference>
<dbReference type="VEuPathDB" id="HostDB:ENSMUSG00000032398"/>
<dbReference type="eggNOG" id="ENOG502S8MI">
    <property type="taxonomic scope" value="Eukaryota"/>
</dbReference>
<dbReference type="GeneTree" id="ENSGT00390000010331"/>
<dbReference type="HOGENOM" id="CLU_167684_0_0_1"/>
<dbReference type="InParanoid" id="Q8R2K7"/>
<dbReference type="OMA" id="EDPPNIM"/>
<dbReference type="OrthoDB" id="6158499at2759"/>
<dbReference type="PhylomeDB" id="Q8R2K7"/>
<dbReference type="TreeFam" id="TF328823"/>
<dbReference type="Reactome" id="R-MMU-6807505">
    <property type="pathway name" value="RNA polymerase II transcribes snRNA genes"/>
</dbReference>
<dbReference type="Reactome" id="R-MMU-76071">
    <property type="pathway name" value="RNA Polymerase III Transcription Initiation From Type 3 Promoter"/>
</dbReference>
<dbReference type="BioGRID-ORCS" id="330959">
    <property type="hits" value="30 hits in 75 CRISPR screens"/>
</dbReference>
<dbReference type="ChiTaRS" id="Snapc5">
    <property type="organism name" value="mouse"/>
</dbReference>
<dbReference type="PRO" id="PR:Q8R2K7"/>
<dbReference type="Proteomes" id="UP000000589">
    <property type="component" value="Chromosome 9"/>
</dbReference>
<dbReference type="RNAct" id="Q8R2K7">
    <property type="molecule type" value="protein"/>
</dbReference>
<dbReference type="Bgee" id="ENSMUSG00000032398">
    <property type="expression patterns" value="Expressed in interventricular septum and 111 other cell types or tissues"/>
</dbReference>
<dbReference type="GO" id="GO:0016604">
    <property type="term" value="C:nuclear body"/>
    <property type="evidence" value="ECO:0007669"/>
    <property type="project" value="Ensembl"/>
</dbReference>
<dbReference type="GO" id="GO:0005730">
    <property type="term" value="C:nucleolus"/>
    <property type="evidence" value="ECO:0007669"/>
    <property type="project" value="Ensembl"/>
</dbReference>
<dbReference type="GO" id="GO:0016251">
    <property type="term" value="F:RNA polymerase II general transcription initiation factor activity"/>
    <property type="evidence" value="ECO:0007669"/>
    <property type="project" value="Ensembl"/>
</dbReference>
<dbReference type="GO" id="GO:0000995">
    <property type="term" value="F:RNA polymerase III general transcription initiation factor activity"/>
    <property type="evidence" value="ECO:0007669"/>
    <property type="project" value="Ensembl"/>
</dbReference>
<dbReference type="GO" id="GO:0042795">
    <property type="term" value="P:snRNA transcription by RNA polymerase II"/>
    <property type="evidence" value="ECO:0007669"/>
    <property type="project" value="Ensembl"/>
</dbReference>
<dbReference type="GO" id="GO:0042796">
    <property type="term" value="P:snRNA transcription by RNA polymerase III"/>
    <property type="evidence" value="ECO:0007669"/>
    <property type="project" value="Ensembl"/>
</dbReference>
<dbReference type="GO" id="GO:0006384">
    <property type="term" value="P:transcription initiation at RNA polymerase III promoter"/>
    <property type="evidence" value="ECO:0007669"/>
    <property type="project" value="InterPro"/>
</dbReference>
<dbReference type="InterPro" id="IPR029138">
    <property type="entry name" value="SNAPC5"/>
</dbReference>
<dbReference type="PANTHER" id="PTHR15333">
    <property type="entry name" value="SNRNA-ACTIVATING PROTEIN COMPLEX SUBUNIT 5"/>
    <property type="match status" value="1"/>
</dbReference>
<dbReference type="PANTHER" id="PTHR15333:SF2">
    <property type="entry name" value="SNRNA-ACTIVATING PROTEIN COMPLEX SUBUNIT 5"/>
    <property type="match status" value="1"/>
</dbReference>
<dbReference type="Pfam" id="PF15497">
    <property type="entry name" value="SNAPC5"/>
    <property type="match status" value="1"/>
</dbReference>
<reference key="1">
    <citation type="journal article" date="2009" name="PLoS Biol.">
        <title>Lineage-specific biology revealed by a finished genome assembly of the mouse.</title>
        <authorList>
            <person name="Church D.M."/>
            <person name="Goodstadt L."/>
            <person name="Hillier L.W."/>
            <person name="Zody M.C."/>
            <person name="Goldstein S."/>
            <person name="She X."/>
            <person name="Bult C.J."/>
            <person name="Agarwala R."/>
            <person name="Cherry J.L."/>
            <person name="DiCuccio M."/>
            <person name="Hlavina W."/>
            <person name="Kapustin Y."/>
            <person name="Meric P."/>
            <person name="Maglott D."/>
            <person name="Birtle Z."/>
            <person name="Marques A.C."/>
            <person name="Graves T."/>
            <person name="Zhou S."/>
            <person name="Teague B."/>
            <person name="Potamousis K."/>
            <person name="Churas C."/>
            <person name="Place M."/>
            <person name="Herschleb J."/>
            <person name="Runnheim R."/>
            <person name="Forrest D."/>
            <person name="Amos-Landgraf J."/>
            <person name="Schwartz D.C."/>
            <person name="Cheng Z."/>
            <person name="Lindblad-Toh K."/>
            <person name="Eichler E.E."/>
            <person name="Ponting C.P."/>
        </authorList>
    </citation>
    <scope>NUCLEOTIDE SEQUENCE [LARGE SCALE GENOMIC DNA]</scope>
    <source>
        <strain>C57BL/6J</strain>
    </source>
</reference>
<reference key="2">
    <citation type="journal article" date="2004" name="Genome Res.">
        <title>The status, quality, and expansion of the NIH full-length cDNA project: the Mammalian Gene Collection (MGC).</title>
        <authorList>
            <consortium name="The MGC Project Team"/>
        </authorList>
    </citation>
    <scope>NUCLEOTIDE SEQUENCE [LARGE SCALE MRNA]</scope>
    <source>
        <strain>C57BL/6J</strain>
        <tissue>Mammary gland</tissue>
    </source>
</reference>
<feature type="chain" id="PRO_0000072029" description="snRNA-activating protein complex subunit 5">
    <location>
        <begin position="1"/>
        <end position="102"/>
    </location>
</feature>
<feature type="region of interest" description="Disordered" evidence="2">
    <location>
        <begin position="73"/>
        <end position="102"/>
    </location>
</feature>
<feature type="compositionally biased region" description="Polar residues" evidence="2">
    <location>
        <begin position="73"/>
        <end position="82"/>
    </location>
</feature>
<feature type="compositionally biased region" description="Acidic residues" evidence="2">
    <location>
        <begin position="85"/>
        <end position="102"/>
    </location>
</feature>
<feature type="sequence conflict" description="In Ref. 2; AAH28529." evidence="3" ref="2">
    <location>
        <begin position="96"/>
        <end position="99"/>
    </location>
</feature>
<name>SNPC5_MOUSE</name>
<organism>
    <name type="scientific">Mus musculus</name>
    <name type="common">Mouse</name>
    <dbReference type="NCBI Taxonomy" id="10090"/>
    <lineage>
        <taxon>Eukaryota</taxon>
        <taxon>Metazoa</taxon>
        <taxon>Chordata</taxon>
        <taxon>Craniata</taxon>
        <taxon>Vertebrata</taxon>
        <taxon>Euteleostomi</taxon>
        <taxon>Mammalia</taxon>
        <taxon>Eutheria</taxon>
        <taxon>Euarchontoglires</taxon>
        <taxon>Glires</taxon>
        <taxon>Rodentia</taxon>
        <taxon>Myomorpha</taxon>
        <taxon>Muroidea</taxon>
        <taxon>Muridae</taxon>
        <taxon>Murinae</taxon>
        <taxon>Mus</taxon>
        <taxon>Mus</taxon>
    </lineage>
</organism>
<gene>
    <name evidence="4" type="primary">Snapc5</name>
</gene>